<feature type="signal peptide" evidence="1">
    <location>
        <begin position="1"/>
        <end position="23"/>
    </location>
</feature>
<feature type="chain" id="PRO_5000099568" description="Lipoprotein LpqB">
    <location>
        <begin position="24"/>
        <end position="626"/>
    </location>
</feature>
<feature type="region of interest" description="Disordered" evidence="2">
    <location>
        <begin position="428"/>
        <end position="457"/>
    </location>
</feature>
<feature type="compositionally biased region" description="Acidic residues" evidence="2">
    <location>
        <begin position="430"/>
        <end position="441"/>
    </location>
</feature>
<feature type="lipid moiety-binding region" description="N-palmitoyl cysteine" evidence="1">
    <location>
        <position position="24"/>
    </location>
</feature>
<feature type="lipid moiety-binding region" description="S-diacylglycerol cysteine" evidence="1">
    <location>
        <position position="24"/>
    </location>
</feature>
<gene>
    <name evidence="1" type="primary">lpqB</name>
    <name type="ordered locus">Tfu_2494</name>
</gene>
<accession>Q47LZ5</accession>
<keyword id="KW-1003">Cell membrane</keyword>
<keyword id="KW-0449">Lipoprotein</keyword>
<keyword id="KW-0472">Membrane</keyword>
<keyword id="KW-0564">Palmitate</keyword>
<keyword id="KW-0732">Signal</keyword>
<evidence type="ECO:0000255" key="1">
    <source>
        <dbReference type="HAMAP-Rule" id="MF_01373"/>
    </source>
</evidence>
<evidence type="ECO:0000256" key="2">
    <source>
        <dbReference type="SAM" id="MobiDB-lite"/>
    </source>
</evidence>
<organism>
    <name type="scientific">Thermobifida fusca (strain YX)</name>
    <dbReference type="NCBI Taxonomy" id="269800"/>
    <lineage>
        <taxon>Bacteria</taxon>
        <taxon>Bacillati</taxon>
        <taxon>Actinomycetota</taxon>
        <taxon>Actinomycetes</taxon>
        <taxon>Streptosporangiales</taxon>
        <taxon>Nocardiopsidaceae</taxon>
        <taxon>Thermobifida</taxon>
    </lineage>
</organism>
<protein>
    <recommendedName>
        <fullName evidence="1">Lipoprotein LpqB</fullName>
    </recommendedName>
</protein>
<comment type="subcellular location">
    <subcellularLocation>
        <location evidence="1">Cell membrane</location>
        <topology evidence="1">Lipid-anchor</topology>
    </subcellularLocation>
</comment>
<comment type="similarity">
    <text evidence="1">Belongs to the LpqB lipoprotein family.</text>
</comment>
<name>LPQB_THEFY</name>
<dbReference type="EMBL" id="CP000088">
    <property type="protein sequence ID" value="AAZ56527.1"/>
    <property type="molecule type" value="Genomic_DNA"/>
</dbReference>
<dbReference type="RefSeq" id="WP_011292917.1">
    <property type="nucleotide sequence ID" value="NC_007333.1"/>
</dbReference>
<dbReference type="SMR" id="Q47LZ5"/>
<dbReference type="STRING" id="269800.Tfu_2494"/>
<dbReference type="KEGG" id="tfu:Tfu_2494"/>
<dbReference type="eggNOG" id="COG5401">
    <property type="taxonomic scope" value="Bacteria"/>
</dbReference>
<dbReference type="HOGENOM" id="CLU_032207_0_1_11"/>
<dbReference type="OrthoDB" id="3226781at2"/>
<dbReference type="GO" id="GO:0005886">
    <property type="term" value="C:plasma membrane"/>
    <property type="evidence" value="ECO:0007669"/>
    <property type="project" value="UniProtKB-SubCell"/>
</dbReference>
<dbReference type="HAMAP" id="MF_01373">
    <property type="entry name" value="LpqB_lipoprot"/>
    <property type="match status" value="1"/>
</dbReference>
<dbReference type="InterPro" id="IPR019606">
    <property type="entry name" value="GerMN"/>
</dbReference>
<dbReference type="InterPro" id="IPR023959">
    <property type="entry name" value="Lipoprotein_LpqB"/>
</dbReference>
<dbReference type="InterPro" id="IPR018910">
    <property type="entry name" value="Lipoprotein_LpqB_C"/>
</dbReference>
<dbReference type="Pfam" id="PF10646">
    <property type="entry name" value="Germane"/>
    <property type="match status" value="1"/>
</dbReference>
<dbReference type="Pfam" id="PF10647">
    <property type="entry name" value="Gmad1"/>
    <property type="match status" value="1"/>
</dbReference>
<dbReference type="SMART" id="SM00909">
    <property type="entry name" value="Germane"/>
    <property type="match status" value="1"/>
</dbReference>
<dbReference type="SUPFAM" id="SSF82171">
    <property type="entry name" value="DPP6 N-terminal domain-like"/>
    <property type="match status" value="1"/>
</dbReference>
<dbReference type="PROSITE" id="PS51257">
    <property type="entry name" value="PROKAR_LIPOPROTEIN"/>
    <property type="match status" value="1"/>
</dbReference>
<proteinExistence type="inferred from homology"/>
<sequence>MIGQANRIAAAVSTACLAVLLAGCATVPTGGPTFEGRGGGAQGQVDTFTRLLPAGPQPGWGENALVRGFLKDLGSFEENHEAARLYMTEECADVWQPSDRVLVYEEMDAVRFDVETVEEERAARVRVRTPLYATIRPDGQYVPASPGEAIDVVFDLTKVDGEWRIANLPDTILLSRQDVDRVYRPLNLYYFNRDMSTLVPDPVFLPVSSAVNITEQLSQRLVTMLLDGPTDWLAPAVRTSFPAGTTATVEYSSGNVTVNLDHRAAAADPRRLFGMGAQLVWTLKQLPEIQEFTLRLDGEEVELPGVEDGVLQASSQEWNSVNPAGMTGSPRAYFLRDGQLWSLDVDQREALVPGAAGHGRILVEEHAVSLDETRVAGIMPDDDSVRVAPIAEDGEYTTVLQGGDYTSLSWDGYGNLWVVEDLSAEVAEAEREEDLADDTEPGDTAVGSTERRETDRGEKRQVTRLWLLAEDADPVEVHAPELAGVPVTELRVSRDGTRVAVLTGGADGGQVLVGRVVHGESTVSLQAFLPLARDLVTVTDLSWRGADQLAVLGQKERGAIQAYLVSLNGSGESTSAGAVTGSDMKTITAAPGMPLLSGTEEDTISSSSDRLMWRRAVEGTKPVYPG</sequence>
<reference key="1">
    <citation type="journal article" date="2007" name="J. Bacteriol.">
        <title>Genome sequence and analysis of the soil cellulolytic actinomycete Thermobifida fusca YX.</title>
        <authorList>
            <person name="Lykidis A."/>
            <person name="Mavromatis K."/>
            <person name="Ivanova N."/>
            <person name="Anderson I."/>
            <person name="Land M."/>
            <person name="DiBartolo G."/>
            <person name="Martinez M."/>
            <person name="Lapidus A."/>
            <person name="Lucas S."/>
            <person name="Copeland A."/>
            <person name="Richardson P."/>
            <person name="Wilson D.B."/>
            <person name="Kyrpides N."/>
        </authorList>
    </citation>
    <scope>NUCLEOTIDE SEQUENCE [LARGE SCALE GENOMIC DNA]</scope>
    <source>
        <strain>YX</strain>
    </source>
</reference>